<gene>
    <name type="primary">Pi4k2a</name>
</gene>
<sequence length="479" mass="54258">MDETSPLVSPERAQPPEYTFPSGSGAHFPQVPGGAVRVAAAAGSGPSPPCSPGHDRERQPLLDRARGAAAQGQTHTVAVQAQALAAQAAVAAHAVQTHRERNDFPEDPEFEVVVRQAEVAIECSIYPERIYQGSSGSYFVKDSQGRIVAVFKPKNEEPYGHLNPKWTKWLQKLCCPCCFGRDCLVLNQGYLSEAGASLVDQKLELNIVPRTKVVYLASETFNYSAIDRVKSRGKRLALEKVPKVGQRFNRIGLPPKVGSFQLFVEGYKDADYWLRRFEAEPLPENTNRQLLLQFERLVVLDYIIRNTDRGNDNWLIKYDCPMDNSSCRDTDWVMVREPVIKVAAIDNGLAFPLKHPDSWRAYPFYWAWLPQAKVPFSQEIKDLILPKISDPNFIKDLEEDLYELFKRDPGFDRGQFHKQIAVMRGQILNLTQALKDNKSPLHLVQMPPVIVETARSHQRSASESYTQSFQSRKPFFSWW</sequence>
<name>P4K2A_MOUSE</name>
<reference key="1">
    <citation type="journal article" date="2004" name="Genome Res.">
        <title>The status, quality, and expansion of the NIH full-length cDNA project: the Mammalian Gene Collection (MGC).</title>
        <authorList>
            <consortium name="The MGC Project Team"/>
        </authorList>
    </citation>
    <scope>NUCLEOTIDE SEQUENCE [LARGE SCALE MRNA]</scope>
    <source>
        <strain>FVB/N</strain>
        <tissue>Mammary tumor</tissue>
    </source>
</reference>
<reference key="2">
    <citation type="journal article" date="2007" name="Proc. Natl. Acad. Sci. U.S.A.">
        <title>Large-scale phosphorylation analysis of mouse liver.</title>
        <authorList>
            <person name="Villen J."/>
            <person name="Beausoleil S.A."/>
            <person name="Gerber S.A."/>
            <person name="Gygi S.P."/>
        </authorList>
    </citation>
    <scope>PHOSPHORYLATION [LARGE SCALE ANALYSIS] AT SER-47 AND SER-51</scope>
    <scope>IDENTIFICATION BY MASS SPECTROMETRY [LARGE SCALE ANALYSIS]</scope>
    <source>
        <tissue>Liver</tissue>
    </source>
</reference>
<reference key="3">
    <citation type="journal article" date="2009" name="Immunity">
        <title>The phagosomal proteome in interferon-gamma-activated macrophages.</title>
        <authorList>
            <person name="Trost M."/>
            <person name="English L."/>
            <person name="Lemieux S."/>
            <person name="Courcelles M."/>
            <person name="Desjardins M."/>
            <person name="Thibault P."/>
        </authorList>
    </citation>
    <scope>PHOSPHORYLATION [LARGE SCALE ANALYSIS] AT SER-47 AND SER-51</scope>
    <scope>IDENTIFICATION BY MASS SPECTROMETRY [LARGE SCALE ANALYSIS]</scope>
</reference>
<reference key="4">
    <citation type="journal article" date="2009" name="Proc. Natl. Acad. Sci. U.S.A.">
        <title>Loss of phosphatidylinositol 4-kinase 2alpha activity causes late onset degeneration of spinal cord axons.</title>
        <authorList>
            <person name="Simons J.P."/>
            <person name="Al-Shawi R."/>
            <person name="Minogue S."/>
            <person name="Waugh M.G."/>
            <person name="Wiedemann C."/>
            <person name="Evangelou S."/>
            <person name="Loesch A."/>
            <person name="Sihra T.S."/>
            <person name="King R."/>
            <person name="Warner T.T."/>
            <person name="Hsuan J.J."/>
        </authorList>
    </citation>
    <scope>DISRUPTION PHENOTYPE</scope>
    <scope>CATALYTIC ACTIVITY</scope>
    <scope>FUNCTION</scope>
    <scope>SUBCELLULAR LOCATION</scope>
    <scope>TISSUE SPECIFICITY</scope>
</reference>
<reference key="5">
    <citation type="journal article" date="2010" name="Cell">
        <title>A tissue-specific atlas of mouse protein phosphorylation and expression.</title>
        <authorList>
            <person name="Huttlin E.L."/>
            <person name="Jedrychowski M.P."/>
            <person name="Elias J.E."/>
            <person name="Goswami T."/>
            <person name="Rad R."/>
            <person name="Beausoleil S.A."/>
            <person name="Villen J."/>
            <person name="Haas W."/>
            <person name="Sowa M.E."/>
            <person name="Gygi S.P."/>
        </authorList>
    </citation>
    <scope>PHOSPHORYLATION [LARGE SCALE ANALYSIS] AT SER-47 AND SER-51</scope>
    <scope>IDENTIFICATION BY MASS SPECTROMETRY [LARGE SCALE ANALYSIS]</scope>
    <source>
        <tissue>Brain</tissue>
        <tissue>Brown adipose tissue</tissue>
        <tissue>Heart</tissue>
        <tissue>Kidney</tissue>
        <tissue>Liver</tissue>
        <tissue>Lung</tissue>
        <tissue>Pancreas</tissue>
        <tissue>Spleen</tissue>
        <tissue>Testis</tissue>
    </source>
</reference>
<reference key="6">
    <citation type="journal article" date="2011" name="Mol. Biol. Cell">
        <title>The schizophrenia susceptibility factor dysbindin and its associated complex sort cargoes from cell bodies to the synapse.</title>
        <authorList>
            <person name="Larimore J."/>
            <person name="Tornieri K."/>
            <person name="Ryder P.V."/>
            <person name="Gokhale A."/>
            <person name="Zlatic S.A."/>
            <person name="Craige B."/>
            <person name="Lee J.D."/>
            <person name="Talbot K."/>
            <person name="Pare J.F."/>
            <person name="Smith Y."/>
            <person name="Faundez V."/>
        </authorList>
    </citation>
    <scope>SUBCELLULAR LOCATION</scope>
    <scope>SUBUNIT</scope>
</reference>
<reference key="7">
    <citation type="journal article" date="2012" name="EMBO Rep.">
        <title>Phosphatidylinositol 4-kinase IIalpha function at endosomes is regulated by the ubiquitin ligase Itch.</title>
        <authorList>
            <person name="Mossinger J."/>
            <person name="Wieffer M."/>
            <person name="Krause E."/>
            <person name="Freund C."/>
            <person name="Gerth F."/>
            <person name="Krauss M."/>
            <person name="Haucke V."/>
        </authorList>
    </citation>
    <scope>SUBCELLULAR LOCATION</scope>
    <scope>UBIQUITINATION</scope>
    <scope>INTERACTION WITH ITCH</scope>
</reference>
<reference key="8">
    <citation type="journal article" date="2012" name="Oncogene">
        <title>The kinase c-Src and the phosphatase TC45 coordinately regulate c-Fos tyrosine phosphorylation and c-Fos phospholipid synthesis activation capacity.</title>
        <authorList>
            <person name="Ferrero G.O."/>
            <person name="Velazquez F.N."/>
            <person name="Caputto B.L."/>
        </authorList>
    </citation>
    <scope>INTERACTION WITH FOS</scope>
</reference>
<proteinExistence type="evidence at protein level"/>
<organism>
    <name type="scientific">Mus musculus</name>
    <name type="common">Mouse</name>
    <dbReference type="NCBI Taxonomy" id="10090"/>
    <lineage>
        <taxon>Eukaryota</taxon>
        <taxon>Metazoa</taxon>
        <taxon>Chordata</taxon>
        <taxon>Craniata</taxon>
        <taxon>Vertebrata</taxon>
        <taxon>Euteleostomi</taxon>
        <taxon>Mammalia</taxon>
        <taxon>Eutheria</taxon>
        <taxon>Euarchontoglires</taxon>
        <taxon>Glires</taxon>
        <taxon>Rodentia</taxon>
        <taxon>Myomorpha</taxon>
        <taxon>Muroidea</taxon>
        <taxon>Muridae</taxon>
        <taxon>Murinae</taxon>
        <taxon>Mus</taxon>
        <taxon>Mus</taxon>
    </lineage>
</organism>
<feature type="chain" id="PRO_0000285159" description="Phosphatidylinositol 4-kinase type 2-alpha">
    <location>
        <begin position="1"/>
        <end position="479"/>
    </location>
</feature>
<feature type="domain" description="PI3K/PI4K catalytic" evidence="3">
    <location>
        <begin position="124"/>
        <end position="453"/>
    </location>
</feature>
<feature type="region of interest" description="Disordered" evidence="4">
    <location>
        <begin position="1"/>
        <end position="58"/>
    </location>
</feature>
<feature type="region of interest" description="G-loop" evidence="3">
    <location>
        <begin position="130"/>
        <end position="136"/>
    </location>
</feature>
<feature type="region of interest" description="Important for substrate binding" evidence="2">
    <location>
        <begin position="157"/>
        <end position="159"/>
    </location>
</feature>
<feature type="region of interest" description="Important for interaction with membranes" evidence="2">
    <location>
        <begin position="165"/>
        <end position="178"/>
    </location>
</feature>
<feature type="region of interest" description="Important for interaction with membranes" evidence="2">
    <location>
        <begin position="268"/>
        <end position="276"/>
    </location>
</feature>
<feature type="region of interest" description="Catalytic loop" evidence="3">
    <location>
        <begin position="305"/>
        <end position="313"/>
    </location>
</feature>
<feature type="region of interest" description="Activation loop" evidence="3">
    <location>
        <begin position="344"/>
        <end position="364"/>
    </location>
</feature>
<feature type="region of interest" description="Important for interaction with membranes" evidence="2">
    <location>
        <begin position="359"/>
        <end position="368"/>
    </location>
</feature>
<feature type="compositionally biased region" description="Low complexity" evidence="4">
    <location>
        <begin position="31"/>
        <end position="45"/>
    </location>
</feature>
<feature type="binding site" evidence="2">
    <location>
        <begin position="131"/>
        <end position="137"/>
    </location>
    <ligand>
        <name>ATP</name>
        <dbReference type="ChEBI" id="CHEBI:30616"/>
    </ligand>
</feature>
<feature type="binding site" evidence="2">
    <location>
        <position position="152"/>
    </location>
    <ligand>
        <name>ATP</name>
        <dbReference type="ChEBI" id="CHEBI:30616"/>
    </ligand>
</feature>
<feature type="binding site" evidence="2">
    <location>
        <begin position="261"/>
        <end position="264"/>
    </location>
    <ligand>
        <name>ATP</name>
        <dbReference type="ChEBI" id="CHEBI:30616"/>
    </ligand>
</feature>
<feature type="binding site" evidence="2">
    <location>
        <position position="346"/>
    </location>
    <ligand>
        <name>ATP</name>
        <dbReference type="ChEBI" id="CHEBI:30616"/>
    </ligand>
</feature>
<feature type="modified residue" description="N-acetylmethionine" evidence="2">
    <location>
        <position position="1"/>
    </location>
</feature>
<feature type="modified residue" description="Phosphoserine" evidence="2">
    <location>
        <position position="5"/>
    </location>
</feature>
<feature type="modified residue" description="Phosphoserine" evidence="2">
    <location>
        <position position="9"/>
    </location>
</feature>
<feature type="modified residue" description="Phosphoserine" evidence="2">
    <location>
        <position position="44"/>
    </location>
</feature>
<feature type="modified residue" description="Phosphoserine" evidence="10 11 12">
    <location>
        <position position="47"/>
    </location>
</feature>
<feature type="modified residue" description="Phosphoserine" evidence="10 11 12">
    <location>
        <position position="51"/>
    </location>
</feature>
<feature type="modified residue" description="Phosphoserine" evidence="1">
    <location>
        <position position="462"/>
    </location>
</feature>
<feature type="lipid moiety-binding region" description="S-palmitoyl cysteine" evidence="2">
    <location>
        <position position="174"/>
    </location>
</feature>
<feature type="lipid moiety-binding region" description="S-palmitoyl cysteine" evidence="2">
    <location>
        <position position="175"/>
    </location>
</feature>
<feature type="lipid moiety-binding region" description="S-palmitoyl cysteine" evidence="2">
    <location>
        <position position="177"/>
    </location>
</feature>
<feature type="lipid moiety-binding region" description="S-palmitoyl cysteine" evidence="2">
    <location>
        <position position="178"/>
    </location>
</feature>
<accession>Q2TBE6</accession>
<dbReference type="EC" id="2.7.1.67" evidence="5"/>
<dbReference type="EMBL" id="BC110363">
    <property type="protein sequence ID" value="AAI10364.1"/>
    <property type="molecule type" value="mRNA"/>
</dbReference>
<dbReference type="CCDS" id="CCDS29821.1"/>
<dbReference type="RefSeq" id="NP_663476.1">
    <property type="nucleotide sequence ID" value="NM_145501.2"/>
</dbReference>
<dbReference type="RefSeq" id="XP_011245707.1">
    <property type="nucleotide sequence ID" value="XM_011247405.4"/>
</dbReference>
<dbReference type="SMR" id="Q2TBE6"/>
<dbReference type="BioGRID" id="220002">
    <property type="interactions" value="24"/>
</dbReference>
<dbReference type="FunCoup" id="Q2TBE6">
    <property type="interactions" value="2381"/>
</dbReference>
<dbReference type="IntAct" id="Q2TBE6">
    <property type="interactions" value="4"/>
</dbReference>
<dbReference type="MINT" id="Q2TBE6"/>
<dbReference type="STRING" id="10090.ENSMUSP00000069284"/>
<dbReference type="iPTMnet" id="Q2TBE6"/>
<dbReference type="PhosphoSitePlus" id="Q2TBE6"/>
<dbReference type="SwissPalm" id="Q2TBE6"/>
<dbReference type="jPOST" id="Q2TBE6"/>
<dbReference type="PaxDb" id="10090-ENSMUSP00000069284"/>
<dbReference type="PeptideAtlas" id="Q2TBE6"/>
<dbReference type="ProteomicsDB" id="294365"/>
<dbReference type="Pumba" id="Q2TBE6"/>
<dbReference type="DNASU" id="84095"/>
<dbReference type="Ensembl" id="ENSMUST00000066778.6">
    <property type="protein sequence ID" value="ENSMUSP00000069284.5"/>
    <property type="gene ID" value="ENSMUSG00000025178.10"/>
</dbReference>
<dbReference type="Ensembl" id="ENSMUST00000235932.2">
    <property type="protein sequence ID" value="ENSMUSP00000158574.2"/>
    <property type="gene ID" value="ENSMUSG00000025178.10"/>
</dbReference>
<dbReference type="GeneID" id="84095"/>
<dbReference type="KEGG" id="mmu:84095"/>
<dbReference type="UCSC" id="uc008hnf.1">
    <property type="organism name" value="mouse"/>
</dbReference>
<dbReference type="AGR" id="MGI:1934031"/>
<dbReference type="CTD" id="55361"/>
<dbReference type="MGI" id="MGI:1934031">
    <property type="gene designation" value="Pi4k2a"/>
</dbReference>
<dbReference type="VEuPathDB" id="HostDB:ENSMUSG00000025178"/>
<dbReference type="eggNOG" id="KOG2381">
    <property type="taxonomic scope" value="Eukaryota"/>
</dbReference>
<dbReference type="GeneTree" id="ENSGT00390000010434"/>
<dbReference type="HOGENOM" id="CLU_032516_2_0_1"/>
<dbReference type="InParanoid" id="Q2TBE6"/>
<dbReference type="OMA" id="IKCDCPL"/>
<dbReference type="OrthoDB" id="3349449at2759"/>
<dbReference type="PhylomeDB" id="Q2TBE6"/>
<dbReference type="TreeFam" id="TF314740"/>
<dbReference type="Reactome" id="R-MMU-1660499">
    <property type="pathway name" value="Synthesis of PIPs at the plasma membrane"/>
</dbReference>
<dbReference type="Reactome" id="R-MMU-1660514">
    <property type="pathway name" value="Synthesis of PIPs at the Golgi membrane"/>
</dbReference>
<dbReference type="Reactome" id="R-MMU-1660516">
    <property type="pathway name" value="Synthesis of PIPs at the early endosome membrane"/>
</dbReference>
<dbReference type="BioGRID-ORCS" id="84095">
    <property type="hits" value="1 hit in 77 CRISPR screens"/>
</dbReference>
<dbReference type="ChiTaRS" id="Pi4k2a">
    <property type="organism name" value="mouse"/>
</dbReference>
<dbReference type="PRO" id="PR:Q2TBE6"/>
<dbReference type="Proteomes" id="UP000000589">
    <property type="component" value="Chromosome 19"/>
</dbReference>
<dbReference type="RNAct" id="Q2TBE6">
    <property type="molecule type" value="protein"/>
</dbReference>
<dbReference type="Bgee" id="ENSMUSG00000025178">
    <property type="expression patterns" value="Expressed in pontine nuclear group and 256 other cell types or tissues"/>
</dbReference>
<dbReference type="ExpressionAtlas" id="Q2TBE6">
    <property type="expression patterns" value="baseline and differential"/>
</dbReference>
<dbReference type="GO" id="GO:0031083">
    <property type="term" value="C:BLOC-1 complex"/>
    <property type="evidence" value="ECO:0007669"/>
    <property type="project" value="Ensembl"/>
</dbReference>
<dbReference type="GO" id="GO:0031410">
    <property type="term" value="C:cytoplasmic vesicle"/>
    <property type="evidence" value="ECO:0000250"/>
    <property type="project" value="UniProtKB"/>
</dbReference>
<dbReference type="GO" id="GO:0030425">
    <property type="term" value="C:dendrite"/>
    <property type="evidence" value="ECO:0000314"/>
    <property type="project" value="UniProtKB"/>
</dbReference>
<dbReference type="GO" id="GO:0031901">
    <property type="term" value="C:early endosome membrane"/>
    <property type="evidence" value="ECO:0007669"/>
    <property type="project" value="Ensembl"/>
</dbReference>
<dbReference type="GO" id="GO:0005768">
    <property type="term" value="C:endosome"/>
    <property type="evidence" value="ECO:0000250"/>
    <property type="project" value="UniProtKB"/>
</dbReference>
<dbReference type="GO" id="GO:0010008">
    <property type="term" value="C:endosome membrane"/>
    <property type="evidence" value="ECO:0000250"/>
    <property type="project" value="UniProtKB"/>
</dbReference>
<dbReference type="GO" id="GO:0098978">
    <property type="term" value="C:glutamatergic synapse"/>
    <property type="evidence" value="ECO:0000314"/>
    <property type="project" value="SynGO"/>
</dbReference>
<dbReference type="GO" id="GO:0000139">
    <property type="term" value="C:Golgi membrane"/>
    <property type="evidence" value="ECO:0007669"/>
    <property type="project" value="Ensembl"/>
</dbReference>
<dbReference type="GO" id="GO:0035838">
    <property type="term" value="C:growing cell tip"/>
    <property type="evidence" value="ECO:0000250"/>
    <property type="project" value="UniProtKB"/>
</dbReference>
<dbReference type="GO" id="GO:0016020">
    <property type="term" value="C:membrane"/>
    <property type="evidence" value="ECO:0000250"/>
    <property type="project" value="UniProtKB"/>
</dbReference>
<dbReference type="GO" id="GO:0045121">
    <property type="term" value="C:membrane raft"/>
    <property type="evidence" value="ECO:0000250"/>
    <property type="project" value="UniProtKB"/>
</dbReference>
<dbReference type="GO" id="GO:0005739">
    <property type="term" value="C:mitochondrion"/>
    <property type="evidence" value="ECO:0000314"/>
    <property type="project" value="UniProtKB"/>
</dbReference>
<dbReference type="GO" id="GO:0043005">
    <property type="term" value="C:neuron projection"/>
    <property type="evidence" value="ECO:0000314"/>
    <property type="project" value="UniProtKB"/>
</dbReference>
<dbReference type="GO" id="GO:0043025">
    <property type="term" value="C:neuronal cell body"/>
    <property type="evidence" value="ECO:0000314"/>
    <property type="project" value="UniProtKB"/>
</dbReference>
<dbReference type="GO" id="GO:0043204">
    <property type="term" value="C:perikaryon"/>
    <property type="evidence" value="ECO:0007669"/>
    <property type="project" value="UniProtKB-SubCell"/>
</dbReference>
<dbReference type="GO" id="GO:0005886">
    <property type="term" value="C:plasma membrane"/>
    <property type="evidence" value="ECO:0000250"/>
    <property type="project" value="UniProtKB"/>
</dbReference>
<dbReference type="GO" id="GO:0048786">
    <property type="term" value="C:presynaptic active zone"/>
    <property type="evidence" value="ECO:0000314"/>
    <property type="project" value="SynGO"/>
</dbReference>
<dbReference type="GO" id="GO:0042734">
    <property type="term" value="C:presynaptic membrane"/>
    <property type="evidence" value="ECO:0000314"/>
    <property type="project" value="UniProtKB"/>
</dbReference>
<dbReference type="GO" id="GO:0004430">
    <property type="term" value="F:1-phosphatidylinositol 4-kinase activity"/>
    <property type="evidence" value="ECO:0000250"/>
    <property type="project" value="UniProtKB"/>
</dbReference>
<dbReference type="GO" id="GO:0035651">
    <property type="term" value="F:AP-3 adaptor complex binding"/>
    <property type="evidence" value="ECO:0000250"/>
    <property type="project" value="UniProtKB"/>
</dbReference>
<dbReference type="GO" id="GO:0005524">
    <property type="term" value="F:ATP binding"/>
    <property type="evidence" value="ECO:0000250"/>
    <property type="project" value="UniProtKB"/>
</dbReference>
<dbReference type="GO" id="GO:0006661">
    <property type="term" value="P:phosphatidylinositol biosynthetic process"/>
    <property type="evidence" value="ECO:0000250"/>
    <property type="project" value="UniProtKB"/>
</dbReference>
<dbReference type="GO" id="GO:0046854">
    <property type="term" value="P:phosphatidylinositol phosphate biosynthetic process"/>
    <property type="evidence" value="ECO:0000250"/>
    <property type="project" value="UniProtKB"/>
</dbReference>
<dbReference type="InterPro" id="IPR039756">
    <property type="entry name" value="Lsb6/PI4K2"/>
</dbReference>
<dbReference type="InterPro" id="IPR000403">
    <property type="entry name" value="PI3/4_kinase_cat_dom"/>
</dbReference>
<dbReference type="PANTHER" id="PTHR12865:SF7">
    <property type="entry name" value="PHOSPHATIDYLINOSITOL 4-KINASE TYPE 2-ALPHA"/>
    <property type="match status" value="1"/>
</dbReference>
<dbReference type="PANTHER" id="PTHR12865">
    <property type="entry name" value="PHOSPHATIDYLINOSITOL 4-KINASE TYPE-II"/>
    <property type="match status" value="1"/>
</dbReference>
<dbReference type="Pfam" id="PF00454">
    <property type="entry name" value="PI3_PI4_kinase"/>
    <property type="match status" value="1"/>
</dbReference>
<dbReference type="SUPFAM" id="SSF56399">
    <property type="entry name" value="ADP-ribosylation"/>
    <property type="match status" value="1"/>
</dbReference>
<dbReference type="PROSITE" id="PS50290">
    <property type="entry name" value="PI3_4_KINASE_3"/>
    <property type="match status" value="1"/>
</dbReference>
<protein>
    <recommendedName>
        <fullName>Phosphatidylinositol 4-kinase type 2-alpha</fullName>
        <ecNumber evidence="5">2.7.1.67</ecNumber>
    </recommendedName>
    <alternativeName>
        <fullName>Phosphatidylinositol 4-kinase type II-alpha</fullName>
    </alternativeName>
</protein>
<keyword id="KW-0007">Acetylation</keyword>
<keyword id="KW-0067">ATP-binding</keyword>
<keyword id="KW-1003">Cell membrane</keyword>
<keyword id="KW-0966">Cell projection</keyword>
<keyword id="KW-0968">Cytoplasmic vesicle</keyword>
<keyword id="KW-0967">Endosome</keyword>
<keyword id="KW-0333">Golgi apparatus</keyword>
<keyword id="KW-0418">Kinase</keyword>
<keyword id="KW-0443">Lipid metabolism</keyword>
<keyword id="KW-0449">Lipoprotein</keyword>
<keyword id="KW-0472">Membrane</keyword>
<keyword id="KW-0496">Mitochondrion</keyword>
<keyword id="KW-0547">Nucleotide-binding</keyword>
<keyword id="KW-0564">Palmitate</keyword>
<keyword id="KW-0597">Phosphoprotein</keyword>
<keyword id="KW-1185">Reference proteome</keyword>
<keyword id="KW-0770">Synapse</keyword>
<keyword id="KW-0771">Synaptosome</keyword>
<keyword id="KW-0808">Transferase</keyword>
<keyword id="KW-0832">Ubl conjugation</keyword>
<evidence type="ECO:0000250" key="1">
    <source>
        <dbReference type="UniProtKB" id="Q99M64"/>
    </source>
</evidence>
<evidence type="ECO:0000250" key="2">
    <source>
        <dbReference type="UniProtKB" id="Q9BTU6"/>
    </source>
</evidence>
<evidence type="ECO:0000255" key="3">
    <source>
        <dbReference type="PROSITE-ProRule" id="PRU00269"/>
    </source>
</evidence>
<evidence type="ECO:0000256" key="4">
    <source>
        <dbReference type="SAM" id="MobiDB-lite"/>
    </source>
</evidence>
<evidence type="ECO:0000269" key="5">
    <source>
    </source>
</evidence>
<evidence type="ECO:0000269" key="6">
    <source>
    </source>
</evidence>
<evidence type="ECO:0000269" key="7">
    <source>
    </source>
</evidence>
<evidence type="ECO:0000269" key="8">
    <source>
    </source>
</evidence>
<evidence type="ECO:0000305" key="9"/>
<evidence type="ECO:0007744" key="10">
    <source>
    </source>
</evidence>
<evidence type="ECO:0007744" key="11">
    <source>
    </source>
</evidence>
<evidence type="ECO:0007744" key="12">
    <source>
    </source>
</evidence>
<comment type="function">
    <text evidence="5 9">Membrane-bound phosphatidylinositol-4 kinase (PI4-kinase) that catalyzes the phosphorylation of phosphatidylinositol (PI) to phosphatidylinositol 4-phosphate (PI4P), a lipid that plays important roles in endocytosis, Golgi function, protein sorting and membrane trafficking and is required for prolonged survival of neurons. Besides, phosphorylation of phosphatidylinositol (PI) to phosphatidylinositol 4-phosphate (PI4P) is the first committed step in the generation of phosphatidylinositol 4,5-bisphosphate (PIP2), a precursor of the second messenger inositol 1,4,5-trisphosphate (InsP3).</text>
</comment>
<comment type="catalytic activity">
    <reaction evidence="5">
        <text>a 1,2-diacyl-sn-glycero-3-phospho-(1D-myo-inositol) + ATP = a 1,2-diacyl-sn-glycero-3-phospho-(1D-myo-inositol 4-phosphate) + ADP + H(+)</text>
        <dbReference type="Rhea" id="RHEA:19877"/>
        <dbReference type="ChEBI" id="CHEBI:15378"/>
        <dbReference type="ChEBI" id="CHEBI:30616"/>
        <dbReference type="ChEBI" id="CHEBI:57880"/>
        <dbReference type="ChEBI" id="CHEBI:58178"/>
        <dbReference type="ChEBI" id="CHEBI:456216"/>
        <dbReference type="EC" id="2.7.1.67"/>
    </reaction>
</comment>
<comment type="subunit">
    <text evidence="2 6 7 8">Associates with the BLOC-1 and the AP-3 complexes; the BLOC-1 complex is required for optimal binding of PI4K2A to the AP-3 complex (PubMed:21998198). Interacts with BLOC1S5 and DTNBP1 (By similarity). Interacts with ITCH (PubMed:23146885). Interacts with FOS; this interaction may enhance phosphatidylinositol phosphorylation activity (PubMed:22105363). Interacts with ATG9A (By similarity).</text>
</comment>
<comment type="subcellular location">
    <subcellularLocation>
        <location evidence="2">Golgi apparatus</location>
        <location evidence="2">trans-Golgi network membrane</location>
        <topology evidence="2">Lipid-anchor</topology>
    </subcellularLocation>
    <subcellularLocation>
        <location evidence="2">Membrane raft</location>
    </subcellularLocation>
    <subcellularLocation>
        <location evidence="1">Endosome</location>
    </subcellularLocation>
    <subcellularLocation>
        <location evidence="2">Endosome membrane</location>
    </subcellularLocation>
    <subcellularLocation>
        <location evidence="1">Cytoplasmic vesicle</location>
    </subcellularLocation>
    <subcellularLocation>
        <location evidence="6">Cell projection</location>
        <location evidence="6">Dendrite</location>
    </subcellularLocation>
    <subcellularLocation>
        <location evidence="6">Presynaptic cell membrane</location>
    </subcellularLocation>
    <subcellularLocation>
        <location evidence="6">Synapse</location>
        <location evidence="6">Synaptosome</location>
    </subcellularLocation>
    <subcellularLocation>
        <location evidence="6">Mitochondrion</location>
    </subcellularLocation>
    <subcellularLocation>
        <location evidence="5">Membrane</location>
        <topology evidence="2">Lipid-anchor</topology>
    </subcellularLocation>
    <subcellularLocation>
        <location evidence="2">Cell membrane</location>
    </subcellularLocation>
    <subcellularLocation>
        <location evidence="6">Perikaryon</location>
    </subcellularLocation>
    <subcellularLocation>
        <location evidence="6">Cell projection</location>
        <location evidence="6">Neuron projection</location>
    </subcellularLocation>
    <text evidence="6">Found in subdomains of the plasma membrane termed non-caveolar membrane rafts. Transported from neuronal cell body to neuron projections and neurite tips in a BLOC-1- and AP-3-complexes-dependent manner (PubMed:21998198).</text>
</comment>
<comment type="tissue specificity">
    <text evidence="5">Detected in brain (at protein level).</text>
</comment>
<comment type="PTM">
    <text evidence="2">Palmitoylated by ZDHHC3 and ZDHHC7 in the CCPCC motif. Palmitoylation is cholesterol-dependent, and required for TGN localization (By similarity).</text>
</comment>
<comment type="PTM">
    <text evidence="8">Ubiquitinated by ITCH; this does not lead to proteasomal degradation.</text>
</comment>
<comment type="disruption phenotype">
    <text evidence="5">Mice are born at the expected Mendelian rate. Young animals have no visible phenotype, but oldeer mice develop urinary incontinence, head tremor, spastic gait, weakness of the hind limbs, followed by additional weakness of the forelimbs, weight loss and premature death. Their brains show no gross anatomical defects, but show loss of Purkinje cells. In addition, mice present massive axon degeneration in the ascending and descending tract of the spinal cord. Male mice are infertile and females are subfertile.</text>
</comment>
<comment type="similarity">
    <text evidence="9">Belongs to the PI3/PI4-kinase family. Type II PI4K subfamily.</text>
</comment>